<feature type="signal peptide" evidence="2">
    <location>
        <begin position="1"/>
        <end position="18"/>
    </location>
</feature>
<feature type="chain" id="PRO_0000425350" description="Proapolipoprotein A-II">
    <location>
        <begin position="19"/>
        <end position="100"/>
    </location>
</feature>
<feature type="chain" id="PRO_0000416569" description="Apolipoprotein A-II" evidence="5">
    <location>
        <begin position="24"/>
        <end position="100"/>
    </location>
</feature>
<feature type="chain" id="PRO_0000424747" description="Truncated apolipoprotein A-II" evidence="5">
    <location>
        <begin position="24"/>
        <end position="99"/>
    </location>
</feature>
<feature type="modified residue" description="Methionine sulfoxide" evidence="1">
    <location>
        <position position="49"/>
    </location>
</feature>
<feature type="modified residue" description="Phosphoserine" evidence="1">
    <location>
        <position position="54"/>
    </location>
</feature>
<feature type="modified residue" description="Phosphoserine" evidence="1">
    <location>
        <position position="68"/>
    </location>
</feature>
<reference key="1">
    <citation type="journal article" date="2009" name="Comp. Biochem. Physiol.">
        <title>Mass spectral analyses of the two major apolipoproteins of great ape high density lipoproteins.</title>
        <authorList>
            <person name="Puppione D.L."/>
            <person name="Della Donna L."/>
            <person name="Laganowsky A.D."/>
            <person name="Bassilian S."/>
            <person name="Souda P."/>
            <person name="Ryder O.A."/>
            <person name="Whitelegge J.P."/>
        </authorList>
    </citation>
    <scope>MASS SPECTROMETRY</scope>
    <scope>SUBUNIT</scope>
</reference>
<reference key="2">
    <citation type="unpublished observations" date="2012-02">
        <authorList>
            <person name="Puppione D.L."/>
        </authorList>
    </citation>
    <scope>IDENTIFICATION</scope>
</reference>
<name>APOA2_GORGO</name>
<keyword id="KW-0165">Cleavage on pair of basic residues</keyword>
<keyword id="KW-1015">Disulfide bond</keyword>
<keyword id="KW-0345">HDL</keyword>
<keyword id="KW-0445">Lipid transport</keyword>
<keyword id="KW-0558">Oxidation</keyword>
<keyword id="KW-0597">Phosphoprotein</keyword>
<keyword id="KW-1185">Reference proteome</keyword>
<keyword id="KW-0964">Secreted</keyword>
<keyword id="KW-0732">Signal</keyword>
<keyword id="KW-0813">Transport</keyword>
<comment type="function">
    <text>May stabilize HDL (high density lipoprotein) structure by its association with lipids, and affect the HDL metabolism.</text>
</comment>
<comment type="subunit">
    <text evidence="1 3">Homodimer; disulfide-linked (PubMed:21298813). Interacts with NAXE and NDRG1 (By similarity).</text>
</comment>
<comment type="subcellular location">
    <subcellularLocation>
        <location evidence="1">Secreted</location>
    </subcellularLocation>
</comment>
<comment type="tissue specificity">
    <text>Plasma.</text>
</comment>
<comment type="mass spectrometry">
    <molecule>Apolipoprotein A-II</molecule>
    <text>Homodimer.</text>
</comment>
<comment type="mass spectrometry">
    <molecule>Truncated apolipoprotein A-II</molecule>
    <text>Homodimer.</text>
</comment>
<comment type="similarity">
    <text evidence="4">Belongs to the apolipoprotein A2 family.</text>
</comment>
<protein>
    <recommendedName>
        <fullName>Apolipoprotein A-II</fullName>
        <shortName>Apo-AII</shortName>
        <shortName>ApoA-II</shortName>
    </recommendedName>
    <alternativeName>
        <fullName>Apolipoprotein A2</fullName>
    </alternativeName>
    <component>
        <recommendedName>
            <fullName>Proapolipoprotein A-II</fullName>
            <shortName>ProapoA-II</shortName>
        </recommendedName>
    </component>
    <component>
        <recommendedName>
            <fullName>Truncated apolipoprotein A-II</fullName>
        </recommendedName>
    </component>
</protein>
<sequence>MKLLAATVLLLTICSLEGALVRRQAKEPCVESLVSQYFQTVTDYGKDLMEKVKSPELQAEAKSYFEKSKEQLTPLIKKAGTELVNFLSYFVELGTQPATQ</sequence>
<dbReference type="RefSeq" id="XP_004027815.1">
    <property type="nucleotide sequence ID" value="XM_004027766.3"/>
</dbReference>
<dbReference type="SMR" id="P0DJG2"/>
<dbReference type="FunCoup" id="P0DJG2">
    <property type="interactions" value="326"/>
</dbReference>
<dbReference type="STRING" id="9593.ENSGGOP00000031634"/>
<dbReference type="Ensembl" id="ENSGGOT00000005742.3">
    <property type="protein sequence ID" value="ENSGGOP00000005597.3"/>
    <property type="gene ID" value="ENSGGOG00000005718.3"/>
</dbReference>
<dbReference type="GeneID" id="101126351"/>
<dbReference type="KEGG" id="ggo:101126351"/>
<dbReference type="CTD" id="336"/>
<dbReference type="eggNOG" id="ENOG502SVYZ">
    <property type="taxonomic scope" value="Eukaryota"/>
</dbReference>
<dbReference type="GeneTree" id="ENSGT00390000003306"/>
<dbReference type="HOGENOM" id="CLU_157351_0_0_1"/>
<dbReference type="InParanoid" id="P0DJG2"/>
<dbReference type="OMA" id="LTICSFE"/>
<dbReference type="OrthoDB" id="14536at9604"/>
<dbReference type="Proteomes" id="UP000001519">
    <property type="component" value="Chromosome 1"/>
</dbReference>
<dbReference type="Bgee" id="ENSGGOG00000005718">
    <property type="expression patterns" value="Expressed in liver and 3 other cell types or tissues"/>
</dbReference>
<dbReference type="GO" id="GO:0034366">
    <property type="term" value="C:spherical high-density lipoprotein particle"/>
    <property type="evidence" value="ECO:0000318"/>
    <property type="project" value="GO_Central"/>
</dbReference>
<dbReference type="GO" id="GO:0008035">
    <property type="term" value="F:high-density lipoprotein particle binding"/>
    <property type="evidence" value="ECO:0000318"/>
    <property type="project" value="GO_Central"/>
</dbReference>
<dbReference type="GO" id="GO:0008289">
    <property type="term" value="F:lipid binding"/>
    <property type="evidence" value="ECO:0007669"/>
    <property type="project" value="InterPro"/>
</dbReference>
<dbReference type="GO" id="GO:0042632">
    <property type="term" value="P:cholesterol homeostasis"/>
    <property type="evidence" value="ECO:0000318"/>
    <property type="project" value="GO_Central"/>
</dbReference>
<dbReference type="GO" id="GO:0030301">
    <property type="term" value="P:cholesterol transport"/>
    <property type="evidence" value="ECO:0000318"/>
    <property type="project" value="GO_Central"/>
</dbReference>
<dbReference type="GO" id="GO:0042157">
    <property type="term" value="P:lipoprotein metabolic process"/>
    <property type="evidence" value="ECO:0007669"/>
    <property type="project" value="InterPro"/>
</dbReference>
<dbReference type="GO" id="GO:0018206">
    <property type="term" value="P:peptidyl-methionine modification"/>
    <property type="evidence" value="ECO:0000250"/>
    <property type="project" value="UniProtKB"/>
</dbReference>
<dbReference type="GO" id="GO:0050766">
    <property type="term" value="P:positive regulation of phagocytosis"/>
    <property type="evidence" value="ECO:0000250"/>
    <property type="project" value="UniProtKB"/>
</dbReference>
<dbReference type="GO" id="GO:0018158">
    <property type="term" value="P:protein oxidation"/>
    <property type="evidence" value="ECO:0000250"/>
    <property type="project" value="UniProtKB"/>
</dbReference>
<dbReference type="GO" id="GO:0050821">
    <property type="term" value="P:protein stabilization"/>
    <property type="evidence" value="ECO:0000250"/>
    <property type="project" value="UniProtKB"/>
</dbReference>
<dbReference type="Gene3D" id="6.10.250.100">
    <property type="match status" value="1"/>
</dbReference>
<dbReference type="InterPro" id="IPR006801">
    <property type="entry name" value="ApoA-II"/>
</dbReference>
<dbReference type="InterPro" id="IPR036172">
    <property type="entry name" value="ApoA-II_sf"/>
</dbReference>
<dbReference type="PANTHER" id="PTHR11027">
    <property type="entry name" value="APOLIPOPROTEIN A-II"/>
    <property type="match status" value="1"/>
</dbReference>
<dbReference type="PANTHER" id="PTHR11027:SF0">
    <property type="entry name" value="APOLIPOPROTEIN A-II"/>
    <property type="match status" value="1"/>
</dbReference>
<dbReference type="Pfam" id="PF04711">
    <property type="entry name" value="ApoA-II"/>
    <property type="match status" value="1"/>
</dbReference>
<dbReference type="SUPFAM" id="SSF82936">
    <property type="entry name" value="Apolipoprotein A-II"/>
    <property type="match status" value="1"/>
</dbReference>
<accession>P0DJG2</accession>
<evidence type="ECO:0000250" key="1">
    <source>
        <dbReference type="UniProtKB" id="P02652"/>
    </source>
</evidence>
<evidence type="ECO:0000255" key="2"/>
<evidence type="ECO:0000269" key="3">
    <source>
    </source>
</evidence>
<evidence type="ECO:0000305" key="4"/>
<evidence type="ECO:0000305" key="5">
    <source>
    </source>
</evidence>
<proteinExistence type="evidence at protein level"/>
<gene>
    <name type="primary">APOA2</name>
</gene>
<organism>
    <name type="scientific">Gorilla gorilla gorilla</name>
    <name type="common">Western lowland gorilla</name>
    <dbReference type="NCBI Taxonomy" id="9595"/>
    <lineage>
        <taxon>Eukaryota</taxon>
        <taxon>Metazoa</taxon>
        <taxon>Chordata</taxon>
        <taxon>Craniata</taxon>
        <taxon>Vertebrata</taxon>
        <taxon>Euteleostomi</taxon>
        <taxon>Mammalia</taxon>
        <taxon>Eutheria</taxon>
        <taxon>Euarchontoglires</taxon>
        <taxon>Primates</taxon>
        <taxon>Haplorrhini</taxon>
        <taxon>Catarrhini</taxon>
        <taxon>Hominidae</taxon>
        <taxon>Gorilla</taxon>
    </lineage>
</organism>